<gene>
    <name evidence="1" type="primary">tsaD</name>
    <name type="synonym">gcp</name>
    <name type="ordered locus">Adeh_3687</name>
</gene>
<keyword id="KW-0012">Acyltransferase</keyword>
<keyword id="KW-0963">Cytoplasm</keyword>
<keyword id="KW-0408">Iron</keyword>
<keyword id="KW-0479">Metal-binding</keyword>
<keyword id="KW-1185">Reference proteome</keyword>
<keyword id="KW-0808">Transferase</keyword>
<keyword id="KW-0819">tRNA processing</keyword>
<reference key="1">
    <citation type="submission" date="2006-01" db="EMBL/GenBank/DDBJ databases">
        <title>Complete sequence of Anaeromyxobacter dehalogenans 2CP-C.</title>
        <authorList>
            <person name="Copeland A."/>
            <person name="Lucas S."/>
            <person name="Lapidus A."/>
            <person name="Barry K."/>
            <person name="Detter J.C."/>
            <person name="Glavina T."/>
            <person name="Hammon N."/>
            <person name="Israni S."/>
            <person name="Pitluck S."/>
            <person name="Brettin T."/>
            <person name="Bruce D."/>
            <person name="Han C."/>
            <person name="Tapia R."/>
            <person name="Gilna P."/>
            <person name="Kiss H."/>
            <person name="Schmutz J."/>
            <person name="Larimer F."/>
            <person name="Land M."/>
            <person name="Kyrpides N."/>
            <person name="Anderson I."/>
            <person name="Sanford R.A."/>
            <person name="Ritalahti K.M."/>
            <person name="Thomas H.S."/>
            <person name="Kirby J.R."/>
            <person name="Zhulin I.B."/>
            <person name="Loeffler F.E."/>
            <person name="Richardson P."/>
        </authorList>
    </citation>
    <scope>NUCLEOTIDE SEQUENCE [LARGE SCALE GENOMIC DNA]</scope>
    <source>
        <strain>2CP-C</strain>
    </source>
</reference>
<sequence length="334" mass="34884">MTRVLAIETSCDETAAAVVEDGRRALSDVVSTQIDIHRRWGGVVPELASRNHVVQVMPVVDEALTRSGVGPEGLDAVAVTSGPGLVGALLVGVQAAKALALAWGKPLVGVNHLEGHLVAAFLAEVPPAFPYLGLVVSGGHTSLYAAHGFGDYRLLGQTRDDAAGEAFDKGAKLLGLPYPGGVAIDRLAKEGDPAAIRFPKAIVKGADLDFSFSGLKTALLHHVKKHGVPEGPALADLCASYQEAIVRALVEKAFRAARRLQFERLVLAGGVAANSRLRAAATARAAEYEGMSVFIPPVRLCTDNAAMIAVAGTHALLRGERAGPDLNADPAWRL</sequence>
<organism>
    <name type="scientific">Anaeromyxobacter dehalogenans (strain 2CP-C)</name>
    <dbReference type="NCBI Taxonomy" id="290397"/>
    <lineage>
        <taxon>Bacteria</taxon>
        <taxon>Pseudomonadati</taxon>
        <taxon>Myxococcota</taxon>
        <taxon>Myxococcia</taxon>
        <taxon>Myxococcales</taxon>
        <taxon>Cystobacterineae</taxon>
        <taxon>Anaeromyxobacteraceae</taxon>
        <taxon>Anaeromyxobacter</taxon>
    </lineage>
</organism>
<dbReference type="EC" id="2.3.1.234" evidence="1"/>
<dbReference type="EMBL" id="CP000251">
    <property type="protein sequence ID" value="ABC83453.1"/>
    <property type="molecule type" value="Genomic_DNA"/>
</dbReference>
<dbReference type="RefSeq" id="WP_011422735.1">
    <property type="nucleotide sequence ID" value="NC_007760.1"/>
</dbReference>
<dbReference type="SMR" id="Q2IFU7"/>
<dbReference type="STRING" id="290397.Adeh_3687"/>
<dbReference type="KEGG" id="ade:Adeh_3687"/>
<dbReference type="eggNOG" id="COG0533">
    <property type="taxonomic scope" value="Bacteria"/>
</dbReference>
<dbReference type="HOGENOM" id="CLU_023208_0_2_7"/>
<dbReference type="OrthoDB" id="9806197at2"/>
<dbReference type="Proteomes" id="UP000001935">
    <property type="component" value="Chromosome"/>
</dbReference>
<dbReference type="GO" id="GO:0005737">
    <property type="term" value="C:cytoplasm"/>
    <property type="evidence" value="ECO:0007669"/>
    <property type="project" value="UniProtKB-SubCell"/>
</dbReference>
<dbReference type="GO" id="GO:0005506">
    <property type="term" value="F:iron ion binding"/>
    <property type="evidence" value="ECO:0007669"/>
    <property type="project" value="UniProtKB-UniRule"/>
</dbReference>
<dbReference type="GO" id="GO:0061711">
    <property type="term" value="F:N(6)-L-threonylcarbamoyladenine synthase activity"/>
    <property type="evidence" value="ECO:0007669"/>
    <property type="project" value="UniProtKB-EC"/>
</dbReference>
<dbReference type="GO" id="GO:0002949">
    <property type="term" value="P:tRNA threonylcarbamoyladenosine modification"/>
    <property type="evidence" value="ECO:0007669"/>
    <property type="project" value="UniProtKB-UniRule"/>
</dbReference>
<dbReference type="CDD" id="cd24133">
    <property type="entry name" value="ASKHA_NBD_TsaD_bac"/>
    <property type="match status" value="1"/>
</dbReference>
<dbReference type="FunFam" id="3.30.420.40:FF:000040">
    <property type="entry name" value="tRNA N6-adenosine threonylcarbamoyltransferase"/>
    <property type="match status" value="1"/>
</dbReference>
<dbReference type="Gene3D" id="3.30.420.40">
    <property type="match status" value="2"/>
</dbReference>
<dbReference type="HAMAP" id="MF_01445">
    <property type="entry name" value="TsaD"/>
    <property type="match status" value="1"/>
</dbReference>
<dbReference type="InterPro" id="IPR043129">
    <property type="entry name" value="ATPase_NBD"/>
</dbReference>
<dbReference type="InterPro" id="IPR000905">
    <property type="entry name" value="Gcp-like_dom"/>
</dbReference>
<dbReference type="InterPro" id="IPR017861">
    <property type="entry name" value="KAE1/TsaD"/>
</dbReference>
<dbReference type="InterPro" id="IPR017860">
    <property type="entry name" value="Peptidase_M22_CS"/>
</dbReference>
<dbReference type="InterPro" id="IPR022450">
    <property type="entry name" value="TsaD"/>
</dbReference>
<dbReference type="NCBIfam" id="TIGR00329">
    <property type="entry name" value="gcp_kae1"/>
    <property type="match status" value="1"/>
</dbReference>
<dbReference type="NCBIfam" id="TIGR03723">
    <property type="entry name" value="T6A_TsaD_YgjD"/>
    <property type="match status" value="1"/>
</dbReference>
<dbReference type="PANTHER" id="PTHR11735">
    <property type="entry name" value="TRNA N6-ADENOSINE THREONYLCARBAMOYLTRANSFERASE"/>
    <property type="match status" value="1"/>
</dbReference>
<dbReference type="PANTHER" id="PTHR11735:SF6">
    <property type="entry name" value="TRNA N6-ADENOSINE THREONYLCARBAMOYLTRANSFERASE, MITOCHONDRIAL"/>
    <property type="match status" value="1"/>
</dbReference>
<dbReference type="Pfam" id="PF00814">
    <property type="entry name" value="TsaD"/>
    <property type="match status" value="1"/>
</dbReference>
<dbReference type="PRINTS" id="PR00789">
    <property type="entry name" value="OSIALOPTASE"/>
</dbReference>
<dbReference type="SUPFAM" id="SSF53067">
    <property type="entry name" value="Actin-like ATPase domain"/>
    <property type="match status" value="2"/>
</dbReference>
<dbReference type="PROSITE" id="PS01016">
    <property type="entry name" value="GLYCOPROTEASE"/>
    <property type="match status" value="1"/>
</dbReference>
<comment type="function">
    <text evidence="1">Required for the formation of a threonylcarbamoyl group on adenosine at position 37 (t(6)A37) in tRNAs that read codons beginning with adenine. Is involved in the transfer of the threonylcarbamoyl moiety of threonylcarbamoyl-AMP (TC-AMP) to the N6 group of A37, together with TsaE and TsaB. TsaD likely plays a direct catalytic role in this reaction.</text>
</comment>
<comment type="catalytic activity">
    <reaction evidence="1">
        <text>L-threonylcarbamoyladenylate + adenosine(37) in tRNA = N(6)-L-threonylcarbamoyladenosine(37) in tRNA + AMP + H(+)</text>
        <dbReference type="Rhea" id="RHEA:37059"/>
        <dbReference type="Rhea" id="RHEA-COMP:10162"/>
        <dbReference type="Rhea" id="RHEA-COMP:10163"/>
        <dbReference type="ChEBI" id="CHEBI:15378"/>
        <dbReference type="ChEBI" id="CHEBI:73682"/>
        <dbReference type="ChEBI" id="CHEBI:74411"/>
        <dbReference type="ChEBI" id="CHEBI:74418"/>
        <dbReference type="ChEBI" id="CHEBI:456215"/>
        <dbReference type="EC" id="2.3.1.234"/>
    </reaction>
</comment>
<comment type="cofactor">
    <cofactor evidence="1">
        <name>Fe(2+)</name>
        <dbReference type="ChEBI" id="CHEBI:29033"/>
    </cofactor>
    <text evidence="1">Binds 1 Fe(2+) ion per subunit.</text>
</comment>
<comment type="subcellular location">
    <subcellularLocation>
        <location evidence="1">Cytoplasm</location>
    </subcellularLocation>
</comment>
<comment type="similarity">
    <text evidence="1">Belongs to the KAE1 / TsaD family.</text>
</comment>
<proteinExistence type="inferred from homology"/>
<name>TSAD_ANADE</name>
<accession>Q2IFU7</accession>
<protein>
    <recommendedName>
        <fullName evidence="1">tRNA N6-adenosine threonylcarbamoyltransferase</fullName>
        <ecNumber evidence="1">2.3.1.234</ecNumber>
    </recommendedName>
    <alternativeName>
        <fullName evidence="1">N6-L-threonylcarbamoyladenine synthase</fullName>
        <shortName evidence="1">t(6)A synthase</shortName>
    </alternativeName>
    <alternativeName>
        <fullName evidence="1">t(6)A37 threonylcarbamoyladenosine biosynthesis protein TsaD</fullName>
    </alternativeName>
    <alternativeName>
        <fullName evidence="1">tRNA threonylcarbamoyladenosine biosynthesis protein TsaD</fullName>
    </alternativeName>
</protein>
<evidence type="ECO:0000255" key="1">
    <source>
        <dbReference type="HAMAP-Rule" id="MF_01445"/>
    </source>
</evidence>
<feature type="chain" id="PRO_0000303254" description="tRNA N6-adenosine threonylcarbamoyltransferase">
    <location>
        <begin position="1"/>
        <end position="334"/>
    </location>
</feature>
<feature type="binding site" evidence="1">
    <location>
        <position position="112"/>
    </location>
    <ligand>
        <name>Fe cation</name>
        <dbReference type="ChEBI" id="CHEBI:24875"/>
    </ligand>
</feature>
<feature type="binding site" evidence="1">
    <location>
        <position position="116"/>
    </location>
    <ligand>
        <name>Fe cation</name>
        <dbReference type="ChEBI" id="CHEBI:24875"/>
    </ligand>
</feature>
<feature type="binding site" evidence="1">
    <location>
        <begin position="135"/>
        <end position="139"/>
    </location>
    <ligand>
        <name>substrate</name>
    </ligand>
</feature>
<feature type="binding site" evidence="1">
    <location>
        <position position="168"/>
    </location>
    <ligand>
        <name>substrate</name>
    </ligand>
</feature>
<feature type="binding site" evidence="1">
    <location>
        <position position="181"/>
    </location>
    <ligand>
        <name>substrate</name>
    </ligand>
</feature>
<feature type="binding site" evidence="1">
    <location>
        <position position="185"/>
    </location>
    <ligand>
        <name>substrate</name>
    </ligand>
</feature>
<feature type="binding site" evidence="1">
    <location>
        <position position="274"/>
    </location>
    <ligand>
        <name>substrate</name>
    </ligand>
</feature>
<feature type="binding site" evidence="1">
    <location>
        <position position="303"/>
    </location>
    <ligand>
        <name>Fe cation</name>
        <dbReference type="ChEBI" id="CHEBI:24875"/>
    </ligand>
</feature>